<organism>
    <name type="scientific">Escherichia coli (strain K12)</name>
    <dbReference type="NCBI Taxonomy" id="83333"/>
    <lineage>
        <taxon>Bacteria</taxon>
        <taxon>Pseudomonadati</taxon>
        <taxon>Pseudomonadota</taxon>
        <taxon>Gammaproteobacteria</taxon>
        <taxon>Enterobacterales</taxon>
        <taxon>Enterobacteriaceae</taxon>
        <taxon>Escherichia</taxon>
    </lineage>
</organism>
<name>YGHR_ECOLI</name>
<feature type="chain" id="PRO_0000169390" description="Uncharacterized ATP-binding protein YghR">
    <location>
        <begin position="1"/>
        <end position="252"/>
    </location>
</feature>
<feature type="binding site" evidence="1">
    <location>
        <begin position="28"/>
        <end position="35"/>
    </location>
    <ligand>
        <name>ATP</name>
        <dbReference type="ChEBI" id="CHEBI:30616"/>
    </ligand>
</feature>
<reference key="1">
    <citation type="journal article" date="1997" name="Science">
        <title>The complete genome sequence of Escherichia coli K-12.</title>
        <authorList>
            <person name="Blattner F.R."/>
            <person name="Plunkett G. III"/>
            <person name="Bloch C.A."/>
            <person name="Perna N.T."/>
            <person name="Burland V."/>
            <person name="Riley M."/>
            <person name="Collado-Vides J."/>
            <person name="Glasner J.D."/>
            <person name="Rode C.K."/>
            <person name="Mayhew G.F."/>
            <person name="Gregor J."/>
            <person name="Davis N.W."/>
            <person name="Kirkpatrick H.A."/>
            <person name="Goeden M.A."/>
            <person name="Rose D.J."/>
            <person name="Mau B."/>
            <person name="Shao Y."/>
        </authorList>
    </citation>
    <scope>NUCLEOTIDE SEQUENCE [LARGE SCALE GENOMIC DNA]</scope>
    <source>
        <strain>K12 / MG1655 / ATCC 47076</strain>
    </source>
</reference>
<reference key="2">
    <citation type="journal article" date="2006" name="Mol. Syst. Biol.">
        <title>Highly accurate genome sequences of Escherichia coli K-12 strains MG1655 and W3110.</title>
        <authorList>
            <person name="Hayashi K."/>
            <person name="Morooka N."/>
            <person name="Yamamoto Y."/>
            <person name="Fujita K."/>
            <person name="Isono K."/>
            <person name="Choi S."/>
            <person name="Ohtsubo E."/>
            <person name="Baba T."/>
            <person name="Wanner B.L."/>
            <person name="Mori H."/>
            <person name="Horiuchi T."/>
        </authorList>
    </citation>
    <scope>NUCLEOTIDE SEQUENCE [LARGE SCALE GENOMIC DNA]</scope>
    <source>
        <strain>K12 / W3110 / ATCC 27325 / DSM 5911</strain>
    </source>
</reference>
<dbReference type="EMBL" id="U28377">
    <property type="protein sequence ID" value="AAA69151.1"/>
    <property type="molecule type" value="Genomic_DNA"/>
</dbReference>
<dbReference type="EMBL" id="U00096">
    <property type="protein sequence ID" value="AAC76020.1"/>
    <property type="molecule type" value="Genomic_DNA"/>
</dbReference>
<dbReference type="EMBL" id="AP009048">
    <property type="protein sequence ID" value="BAE77045.1"/>
    <property type="molecule type" value="Genomic_DNA"/>
</dbReference>
<dbReference type="PIR" id="F65084">
    <property type="entry name" value="F65084"/>
</dbReference>
<dbReference type="RefSeq" id="NP_417458.1">
    <property type="nucleotide sequence ID" value="NC_000913.3"/>
</dbReference>
<dbReference type="RefSeq" id="WP_000339531.1">
    <property type="nucleotide sequence ID" value="NZ_SSZK01000023.1"/>
</dbReference>
<dbReference type="SMR" id="P64572"/>
<dbReference type="BioGRID" id="4261178">
    <property type="interactions" value="17"/>
</dbReference>
<dbReference type="FunCoup" id="P64572">
    <property type="interactions" value="131"/>
</dbReference>
<dbReference type="IntAct" id="P64572">
    <property type="interactions" value="4"/>
</dbReference>
<dbReference type="STRING" id="511145.b2984"/>
<dbReference type="TCDB" id="9.B.331.1.1">
    <property type="family name" value="the atp binding protein (atp-bp) family"/>
</dbReference>
<dbReference type="jPOST" id="P64572"/>
<dbReference type="PaxDb" id="511145-b2984"/>
<dbReference type="EnsemblBacteria" id="AAC76020">
    <property type="protein sequence ID" value="AAC76020"/>
    <property type="gene ID" value="b2984"/>
</dbReference>
<dbReference type="GeneID" id="947310"/>
<dbReference type="KEGG" id="ecj:JW2952"/>
<dbReference type="KEGG" id="eco:b2984"/>
<dbReference type="KEGG" id="ecoc:C3026_16325"/>
<dbReference type="PATRIC" id="fig|1411691.4.peg.3746"/>
<dbReference type="EchoBASE" id="EB2824"/>
<dbReference type="eggNOG" id="COG0125">
    <property type="taxonomic scope" value="Bacteria"/>
</dbReference>
<dbReference type="HOGENOM" id="CLU_102178_0_0_6"/>
<dbReference type="InParanoid" id="P64572"/>
<dbReference type="OMA" id="GAHMEVI"/>
<dbReference type="OrthoDB" id="6853346at2"/>
<dbReference type="PhylomeDB" id="P64572"/>
<dbReference type="BioCyc" id="EcoCyc:G7550-MONOMER"/>
<dbReference type="PRO" id="PR:P64572"/>
<dbReference type="Proteomes" id="UP000000625">
    <property type="component" value="Chromosome"/>
</dbReference>
<dbReference type="GO" id="GO:0005737">
    <property type="term" value="C:cytoplasm"/>
    <property type="evidence" value="ECO:0000318"/>
    <property type="project" value="GO_Central"/>
</dbReference>
<dbReference type="GO" id="GO:0005829">
    <property type="term" value="C:cytosol"/>
    <property type="evidence" value="ECO:0000318"/>
    <property type="project" value="GO_Central"/>
</dbReference>
<dbReference type="GO" id="GO:0005524">
    <property type="term" value="F:ATP binding"/>
    <property type="evidence" value="ECO:0007669"/>
    <property type="project" value="UniProtKB-KW"/>
</dbReference>
<dbReference type="GO" id="GO:0004798">
    <property type="term" value="F:dTMP kinase activity"/>
    <property type="evidence" value="ECO:0000318"/>
    <property type="project" value="GO_Central"/>
</dbReference>
<dbReference type="GO" id="GO:0006233">
    <property type="term" value="P:dTDP biosynthetic process"/>
    <property type="evidence" value="ECO:0000318"/>
    <property type="project" value="GO_Central"/>
</dbReference>
<dbReference type="GO" id="GO:0006235">
    <property type="term" value="P:dTTP biosynthetic process"/>
    <property type="evidence" value="ECO:0000318"/>
    <property type="project" value="GO_Central"/>
</dbReference>
<dbReference type="GO" id="GO:0006227">
    <property type="term" value="P:dUDP biosynthetic process"/>
    <property type="evidence" value="ECO:0000318"/>
    <property type="project" value="GO_Central"/>
</dbReference>
<dbReference type="Gene3D" id="3.40.50.300">
    <property type="entry name" value="P-loop containing nucleotide triphosphate hydrolases"/>
    <property type="match status" value="1"/>
</dbReference>
<dbReference type="InterPro" id="IPR027417">
    <property type="entry name" value="P-loop_NTPase"/>
</dbReference>
<dbReference type="SUPFAM" id="SSF52540">
    <property type="entry name" value="P-loop containing nucleoside triphosphate hydrolases"/>
    <property type="match status" value="1"/>
</dbReference>
<comment type="similarity">
    <text evidence="2">To E.coli YghS and YghT.</text>
</comment>
<keyword id="KW-0067">ATP-binding</keyword>
<keyword id="KW-0547">Nucleotide-binding</keyword>
<keyword id="KW-1185">Reference proteome</keyword>
<accession>P64572</accession>
<accession>Q2M9L1</accession>
<accession>Q46842</accession>
<proteinExistence type="predicted"/>
<sequence>MDALQTQTVNSTTAPQPNYIPGLIAVVGCDGTGKSTLTTDLVKSLQQHWQTERRYLGLLSGEDGDKIKRLPLVGVWLERRLAAKSSKTQSMKTKSPALWAAVIMYCFSLRRMANLRKVQRLAQSGVLVVSDRFPQAEISGFYYDGPGIGVERATGKISMFLAQRERRLYQQMAQYRPELIIRLGIDIETAISRKPDHDYAELQDKIGVMSKIGYNGTKILEIDSRAPYSEVLEQAQKAVSLVAIVSDRRSLT</sequence>
<evidence type="ECO:0000255" key="1"/>
<evidence type="ECO:0000305" key="2"/>
<protein>
    <recommendedName>
        <fullName>Uncharacterized ATP-binding protein YghR</fullName>
    </recommendedName>
</protein>
<gene>
    <name type="primary">yghR</name>
    <name type="ordered locus">b2984</name>
    <name type="ordered locus">JW2952</name>
</gene>